<protein>
    <recommendedName>
        <fullName evidence="1">Dihydroorotate dehydrogenase (quinone)</fullName>
        <ecNumber evidence="1">1.3.5.2</ecNumber>
    </recommendedName>
    <alternativeName>
        <fullName evidence="1">DHOdehase</fullName>
        <shortName evidence="1">DHOD</shortName>
        <shortName evidence="1">DHODase</shortName>
    </alternativeName>
    <alternativeName>
        <fullName evidence="1">Dihydroorotate oxidase</fullName>
    </alternativeName>
</protein>
<keyword id="KW-1003">Cell membrane</keyword>
<keyword id="KW-0285">Flavoprotein</keyword>
<keyword id="KW-0288">FMN</keyword>
<keyword id="KW-0472">Membrane</keyword>
<keyword id="KW-0560">Oxidoreductase</keyword>
<keyword id="KW-0665">Pyrimidine biosynthesis</keyword>
<keyword id="KW-1185">Reference proteome</keyword>
<name>PYRD_SHESH</name>
<gene>
    <name evidence="1" type="primary">pyrD</name>
    <name type="ordered locus">Ssed_2475</name>
</gene>
<evidence type="ECO:0000255" key="1">
    <source>
        <dbReference type="HAMAP-Rule" id="MF_00225"/>
    </source>
</evidence>
<proteinExistence type="inferred from homology"/>
<sequence>MFYKIAQKVMFQMDPEKAHHLAIASLKATANTPLDCFYAQKFTQAPVEFMGVTFPNPVGLAAGMDKDGECIDGFHAMGFGHIEVGTVTPRPQPGNDLPRLFRLKPAKAIINRMGFNNKGVDNLVANLKAAKSGALVGVNIGKNKDTPVEQGKDDYLICMEKVYEYSAYIAVNISSPNTPGLRSLQYGDLLDDLLGSLKAKQKDLAEKHGKYVPIALKIAPDLSSEEIEKIADSLIRNQFDGAIATNTTLSRDGVSGLMNSNEAGGLSGKPLNSLSTAVIKQLSDCLKGEIPIIGVGGINTASDALDKLDAGAQMVQIYSGFIYQGPKLIQDIVEAYRAR</sequence>
<dbReference type="EC" id="1.3.5.2" evidence="1"/>
<dbReference type="EMBL" id="CP000821">
    <property type="protein sequence ID" value="ABV37084.1"/>
    <property type="molecule type" value="Genomic_DNA"/>
</dbReference>
<dbReference type="RefSeq" id="WP_012142817.1">
    <property type="nucleotide sequence ID" value="NC_009831.1"/>
</dbReference>
<dbReference type="SMR" id="A8FW61"/>
<dbReference type="STRING" id="425104.Ssed_2475"/>
<dbReference type="KEGG" id="sse:Ssed_2475"/>
<dbReference type="eggNOG" id="COG0167">
    <property type="taxonomic scope" value="Bacteria"/>
</dbReference>
<dbReference type="HOGENOM" id="CLU_013640_2_0_6"/>
<dbReference type="OrthoDB" id="9802377at2"/>
<dbReference type="UniPathway" id="UPA00070">
    <property type="reaction ID" value="UER00946"/>
</dbReference>
<dbReference type="Proteomes" id="UP000002015">
    <property type="component" value="Chromosome"/>
</dbReference>
<dbReference type="GO" id="GO:0005737">
    <property type="term" value="C:cytoplasm"/>
    <property type="evidence" value="ECO:0007669"/>
    <property type="project" value="InterPro"/>
</dbReference>
<dbReference type="GO" id="GO:0005886">
    <property type="term" value="C:plasma membrane"/>
    <property type="evidence" value="ECO:0007669"/>
    <property type="project" value="UniProtKB-SubCell"/>
</dbReference>
<dbReference type="GO" id="GO:0106430">
    <property type="term" value="F:dihydroorotate dehydrogenase (quinone) activity"/>
    <property type="evidence" value="ECO:0007669"/>
    <property type="project" value="UniProtKB-EC"/>
</dbReference>
<dbReference type="GO" id="GO:0006207">
    <property type="term" value="P:'de novo' pyrimidine nucleobase biosynthetic process"/>
    <property type="evidence" value="ECO:0007669"/>
    <property type="project" value="InterPro"/>
</dbReference>
<dbReference type="GO" id="GO:0044205">
    <property type="term" value="P:'de novo' UMP biosynthetic process"/>
    <property type="evidence" value="ECO:0007669"/>
    <property type="project" value="UniProtKB-UniRule"/>
</dbReference>
<dbReference type="CDD" id="cd04738">
    <property type="entry name" value="DHOD_2_like"/>
    <property type="match status" value="1"/>
</dbReference>
<dbReference type="FunFam" id="3.20.20.70:FF:000028">
    <property type="entry name" value="Dihydroorotate dehydrogenase (quinone)"/>
    <property type="match status" value="1"/>
</dbReference>
<dbReference type="Gene3D" id="3.20.20.70">
    <property type="entry name" value="Aldolase class I"/>
    <property type="match status" value="1"/>
</dbReference>
<dbReference type="HAMAP" id="MF_00225">
    <property type="entry name" value="DHO_dh_type2"/>
    <property type="match status" value="1"/>
</dbReference>
<dbReference type="InterPro" id="IPR013785">
    <property type="entry name" value="Aldolase_TIM"/>
</dbReference>
<dbReference type="InterPro" id="IPR050074">
    <property type="entry name" value="DHO_dehydrogenase"/>
</dbReference>
<dbReference type="InterPro" id="IPR012135">
    <property type="entry name" value="Dihydroorotate_DH_1_2"/>
</dbReference>
<dbReference type="InterPro" id="IPR005719">
    <property type="entry name" value="Dihydroorotate_DH_2"/>
</dbReference>
<dbReference type="InterPro" id="IPR005720">
    <property type="entry name" value="Dihydroorotate_DH_cat"/>
</dbReference>
<dbReference type="InterPro" id="IPR001295">
    <property type="entry name" value="Dihydroorotate_DH_CS"/>
</dbReference>
<dbReference type="NCBIfam" id="NF003644">
    <property type="entry name" value="PRK05286.1-1"/>
    <property type="match status" value="1"/>
</dbReference>
<dbReference type="NCBIfam" id="NF003645">
    <property type="entry name" value="PRK05286.1-2"/>
    <property type="match status" value="1"/>
</dbReference>
<dbReference type="NCBIfam" id="NF003646">
    <property type="entry name" value="PRK05286.1-4"/>
    <property type="match status" value="1"/>
</dbReference>
<dbReference type="NCBIfam" id="NF003652">
    <property type="entry name" value="PRK05286.2-5"/>
    <property type="match status" value="1"/>
</dbReference>
<dbReference type="NCBIfam" id="TIGR01036">
    <property type="entry name" value="pyrD_sub2"/>
    <property type="match status" value="1"/>
</dbReference>
<dbReference type="PANTHER" id="PTHR48109:SF4">
    <property type="entry name" value="DIHYDROOROTATE DEHYDROGENASE (QUINONE), MITOCHONDRIAL"/>
    <property type="match status" value="1"/>
</dbReference>
<dbReference type="PANTHER" id="PTHR48109">
    <property type="entry name" value="DIHYDROOROTATE DEHYDROGENASE (QUINONE), MITOCHONDRIAL-RELATED"/>
    <property type="match status" value="1"/>
</dbReference>
<dbReference type="Pfam" id="PF01180">
    <property type="entry name" value="DHO_dh"/>
    <property type="match status" value="1"/>
</dbReference>
<dbReference type="PIRSF" id="PIRSF000164">
    <property type="entry name" value="DHO_oxidase"/>
    <property type="match status" value="1"/>
</dbReference>
<dbReference type="SUPFAM" id="SSF51395">
    <property type="entry name" value="FMN-linked oxidoreductases"/>
    <property type="match status" value="1"/>
</dbReference>
<dbReference type="PROSITE" id="PS00911">
    <property type="entry name" value="DHODEHASE_1"/>
    <property type="match status" value="1"/>
</dbReference>
<dbReference type="PROSITE" id="PS00912">
    <property type="entry name" value="DHODEHASE_2"/>
    <property type="match status" value="1"/>
</dbReference>
<feature type="chain" id="PRO_1000078169" description="Dihydroorotate dehydrogenase (quinone)">
    <location>
        <begin position="1"/>
        <end position="339"/>
    </location>
</feature>
<feature type="active site" description="Nucleophile" evidence="1">
    <location>
        <position position="175"/>
    </location>
</feature>
<feature type="binding site" evidence="1">
    <location>
        <begin position="62"/>
        <end position="66"/>
    </location>
    <ligand>
        <name>FMN</name>
        <dbReference type="ChEBI" id="CHEBI:58210"/>
    </ligand>
</feature>
<feature type="binding site" evidence="1">
    <location>
        <position position="66"/>
    </location>
    <ligand>
        <name>substrate</name>
    </ligand>
</feature>
<feature type="binding site" evidence="1">
    <location>
        <position position="86"/>
    </location>
    <ligand>
        <name>FMN</name>
        <dbReference type="ChEBI" id="CHEBI:58210"/>
    </ligand>
</feature>
<feature type="binding site" evidence="1">
    <location>
        <begin position="111"/>
        <end position="115"/>
    </location>
    <ligand>
        <name>substrate</name>
    </ligand>
</feature>
<feature type="binding site" evidence="1">
    <location>
        <position position="139"/>
    </location>
    <ligand>
        <name>FMN</name>
        <dbReference type="ChEBI" id="CHEBI:58210"/>
    </ligand>
</feature>
<feature type="binding site" evidence="1">
    <location>
        <position position="172"/>
    </location>
    <ligand>
        <name>FMN</name>
        <dbReference type="ChEBI" id="CHEBI:58210"/>
    </ligand>
</feature>
<feature type="binding site" evidence="1">
    <location>
        <position position="172"/>
    </location>
    <ligand>
        <name>substrate</name>
    </ligand>
</feature>
<feature type="binding site" evidence="1">
    <location>
        <position position="177"/>
    </location>
    <ligand>
        <name>substrate</name>
    </ligand>
</feature>
<feature type="binding site" evidence="1">
    <location>
        <position position="217"/>
    </location>
    <ligand>
        <name>FMN</name>
        <dbReference type="ChEBI" id="CHEBI:58210"/>
    </ligand>
</feature>
<feature type="binding site" evidence="1">
    <location>
        <position position="245"/>
    </location>
    <ligand>
        <name>FMN</name>
        <dbReference type="ChEBI" id="CHEBI:58210"/>
    </ligand>
</feature>
<feature type="binding site" evidence="1">
    <location>
        <begin position="246"/>
        <end position="247"/>
    </location>
    <ligand>
        <name>substrate</name>
    </ligand>
</feature>
<feature type="binding site" evidence="1">
    <location>
        <position position="268"/>
    </location>
    <ligand>
        <name>FMN</name>
        <dbReference type="ChEBI" id="CHEBI:58210"/>
    </ligand>
</feature>
<feature type="binding site" evidence="1">
    <location>
        <position position="297"/>
    </location>
    <ligand>
        <name>FMN</name>
        <dbReference type="ChEBI" id="CHEBI:58210"/>
    </ligand>
</feature>
<feature type="binding site" evidence="1">
    <location>
        <begin position="318"/>
        <end position="319"/>
    </location>
    <ligand>
        <name>FMN</name>
        <dbReference type="ChEBI" id="CHEBI:58210"/>
    </ligand>
</feature>
<organism>
    <name type="scientific">Shewanella sediminis (strain HAW-EB3)</name>
    <dbReference type="NCBI Taxonomy" id="425104"/>
    <lineage>
        <taxon>Bacteria</taxon>
        <taxon>Pseudomonadati</taxon>
        <taxon>Pseudomonadota</taxon>
        <taxon>Gammaproteobacteria</taxon>
        <taxon>Alteromonadales</taxon>
        <taxon>Shewanellaceae</taxon>
        <taxon>Shewanella</taxon>
    </lineage>
</organism>
<comment type="function">
    <text evidence="1">Catalyzes the conversion of dihydroorotate to orotate with quinone as electron acceptor.</text>
</comment>
<comment type="catalytic activity">
    <reaction evidence="1">
        <text>(S)-dihydroorotate + a quinone = orotate + a quinol</text>
        <dbReference type="Rhea" id="RHEA:30187"/>
        <dbReference type="ChEBI" id="CHEBI:24646"/>
        <dbReference type="ChEBI" id="CHEBI:30839"/>
        <dbReference type="ChEBI" id="CHEBI:30864"/>
        <dbReference type="ChEBI" id="CHEBI:132124"/>
        <dbReference type="EC" id="1.3.5.2"/>
    </reaction>
</comment>
<comment type="cofactor">
    <cofactor evidence="1">
        <name>FMN</name>
        <dbReference type="ChEBI" id="CHEBI:58210"/>
    </cofactor>
    <text evidence="1">Binds 1 FMN per subunit.</text>
</comment>
<comment type="pathway">
    <text evidence="1">Pyrimidine metabolism; UMP biosynthesis via de novo pathway; orotate from (S)-dihydroorotate (quinone route): step 1/1.</text>
</comment>
<comment type="subunit">
    <text evidence="1">Monomer.</text>
</comment>
<comment type="subcellular location">
    <subcellularLocation>
        <location evidence="1">Cell membrane</location>
        <topology evidence="1">Peripheral membrane protein</topology>
    </subcellularLocation>
</comment>
<comment type="similarity">
    <text evidence="1">Belongs to the dihydroorotate dehydrogenase family. Type 2 subfamily.</text>
</comment>
<reference key="1">
    <citation type="submission" date="2007-08" db="EMBL/GenBank/DDBJ databases">
        <title>Complete sequence of Shewanella sediminis HAW-EB3.</title>
        <authorList>
            <consortium name="US DOE Joint Genome Institute"/>
            <person name="Copeland A."/>
            <person name="Lucas S."/>
            <person name="Lapidus A."/>
            <person name="Barry K."/>
            <person name="Glavina del Rio T."/>
            <person name="Dalin E."/>
            <person name="Tice H."/>
            <person name="Pitluck S."/>
            <person name="Chertkov O."/>
            <person name="Brettin T."/>
            <person name="Bruce D."/>
            <person name="Detter J.C."/>
            <person name="Han C."/>
            <person name="Schmutz J."/>
            <person name="Larimer F."/>
            <person name="Land M."/>
            <person name="Hauser L."/>
            <person name="Kyrpides N."/>
            <person name="Kim E."/>
            <person name="Zhao J.-S."/>
            <person name="Richardson P."/>
        </authorList>
    </citation>
    <scope>NUCLEOTIDE SEQUENCE [LARGE SCALE GENOMIC DNA]</scope>
    <source>
        <strain>HAW-EB3</strain>
    </source>
</reference>
<accession>A8FW61</accession>